<comment type="function">
    <text evidence="1">Is the main repressor of the genes involved in the de novo synthesis of purine nucleotides, regulating purB, purC, purEK, purF, purHD, purL, purMN and guaBA expression. PurR is allosterically activated to bind its cognate DNA by binding the purine corepressors, hypoxanthine or guanine, thereby effecting transcription repression.</text>
</comment>
<comment type="pathway">
    <text>Purine metabolism; purine nucleotide biosynthesis [regulation].</text>
</comment>
<comment type="subunit">
    <text evidence="1">Homodimer.</text>
</comment>
<comment type="domain">
    <text evidence="1">Consists of two structural and functional domains: an N-terminal DNA-binding domain, approximately the first 60 residues, and a larger C-terminal domain, approximately 280 residues, which imparts the function of corepressor binding and oligomerization.</text>
</comment>
<accession>B2VEM5</accession>
<feature type="chain" id="PRO_1000140293" description="HTH-type transcriptional repressor PurR">
    <location>
        <begin position="1"/>
        <end position="341"/>
    </location>
</feature>
<feature type="domain" description="HTH lacI-type" evidence="1">
    <location>
        <begin position="2"/>
        <end position="56"/>
    </location>
</feature>
<feature type="DNA-binding region" description="H-T-H motif" evidence="1">
    <location>
        <begin position="4"/>
        <end position="23"/>
    </location>
</feature>
<feature type="DNA-binding region" evidence="1">
    <location>
        <begin position="48"/>
        <end position="56"/>
    </location>
</feature>
<feature type="binding site" evidence="1">
    <location>
        <position position="73"/>
    </location>
    <ligand>
        <name>hypoxanthine</name>
        <dbReference type="ChEBI" id="CHEBI:17368"/>
    </ligand>
</feature>
<feature type="binding site" evidence="1">
    <location>
        <position position="190"/>
    </location>
    <ligand>
        <name>hypoxanthine</name>
        <dbReference type="ChEBI" id="CHEBI:17368"/>
    </ligand>
</feature>
<feature type="binding site" evidence="1">
    <location>
        <position position="192"/>
    </location>
    <ligand>
        <name>hypoxanthine</name>
        <dbReference type="ChEBI" id="CHEBI:17368"/>
    </ligand>
</feature>
<feature type="binding site" evidence="1">
    <location>
        <position position="221"/>
    </location>
    <ligand>
        <name>hypoxanthine</name>
        <dbReference type="ChEBI" id="CHEBI:17368"/>
    </ligand>
</feature>
<feature type="binding site" evidence="1">
    <location>
        <position position="275"/>
    </location>
    <ligand>
        <name>hypoxanthine</name>
        <dbReference type="ChEBI" id="CHEBI:17368"/>
    </ligand>
</feature>
<gene>
    <name evidence="1" type="primary">purR</name>
    <name type="ordered locus">ETA_18060</name>
</gene>
<dbReference type="EMBL" id="CU468135">
    <property type="protein sequence ID" value="CAO96852.1"/>
    <property type="molecule type" value="Genomic_DNA"/>
</dbReference>
<dbReference type="RefSeq" id="WP_012441541.1">
    <property type="nucleotide sequence ID" value="NC_010694.1"/>
</dbReference>
<dbReference type="SMR" id="B2VEM5"/>
<dbReference type="STRING" id="465817.ETA_18060"/>
<dbReference type="KEGG" id="eta:ETA_18060"/>
<dbReference type="eggNOG" id="COG1609">
    <property type="taxonomic scope" value="Bacteria"/>
</dbReference>
<dbReference type="HOGENOM" id="CLU_037628_6_2_6"/>
<dbReference type="OrthoDB" id="9798934at2"/>
<dbReference type="UniPathway" id="UPA00488"/>
<dbReference type="Proteomes" id="UP000001726">
    <property type="component" value="Chromosome"/>
</dbReference>
<dbReference type="GO" id="GO:0003700">
    <property type="term" value="F:DNA-binding transcription factor activity"/>
    <property type="evidence" value="ECO:0007669"/>
    <property type="project" value="TreeGrafter"/>
</dbReference>
<dbReference type="GO" id="GO:0000976">
    <property type="term" value="F:transcription cis-regulatory region binding"/>
    <property type="evidence" value="ECO:0007669"/>
    <property type="project" value="TreeGrafter"/>
</dbReference>
<dbReference type="GO" id="GO:0045892">
    <property type="term" value="P:negative regulation of DNA-templated transcription"/>
    <property type="evidence" value="ECO:0007669"/>
    <property type="project" value="UniProtKB-UniRule"/>
</dbReference>
<dbReference type="GO" id="GO:0006164">
    <property type="term" value="P:purine nucleotide biosynthetic process"/>
    <property type="evidence" value="ECO:0007669"/>
    <property type="project" value="UniProtKB-UniPathway"/>
</dbReference>
<dbReference type="CDD" id="cd01392">
    <property type="entry name" value="HTH_LacI"/>
    <property type="match status" value="1"/>
</dbReference>
<dbReference type="CDD" id="cd06275">
    <property type="entry name" value="PBP1_PurR"/>
    <property type="match status" value="1"/>
</dbReference>
<dbReference type="FunFam" id="1.10.260.40:FF:000002">
    <property type="entry name" value="HTH-type transcriptional repressor PurR"/>
    <property type="match status" value="1"/>
</dbReference>
<dbReference type="FunFam" id="3.40.50.2300:FF:000045">
    <property type="entry name" value="HTH-type transcriptional repressor PurR"/>
    <property type="match status" value="1"/>
</dbReference>
<dbReference type="Gene3D" id="3.40.50.2300">
    <property type="match status" value="2"/>
</dbReference>
<dbReference type="Gene3D" id="1.10.260.40">
    <property type="entry name" value="lambda repressor-like DNA-binding domains"/>
    <property type="match status" value="1"/>
</dbReference>
<dbReference type="HAMAP" id="MF_01277">
    <property type="entry name" value="HTH_type_PurR"/>
    <property type="match status" value="1"/>
</dbReference>
<dbReference type="InterPro" id="IPR000843">
    <property type="entry name" value="HTH_LacI"/>
</dbReference>
<dbReference type="InterPro" id="IPR046335">
    <property type="entry name" value="LacI/GalR-like_sensor"/>
</dbReference>
<dbReference type="InterPro" id="IPR010982">
    <property type="entry name" value="Lambda_DNA-bd_dom_sf"/>
</dbReference>
<dbReference type="InterPro" id="IPR028082">
    <property type="entry name" value="Peripla_BP_I"/>
</dbReference>
<dbReference type="InterPro" id="IPR023588">
    <property type="entry name" value="Tscrpt_reg_HTH_PurR"/>
</dbReference>
<dbReference type="NCBIfam" id="NF007979">
    <property type="entry name" value="PRK10703.1"/>
    <property type="match status" value="1"/>
</dbReference>
<dbReference type="PANTHER" id="PTHR30146:SF148">
    <property type="entry name" value="HTH-TYPE TRANSCRIPTIONAL REPRESSOR PURR-RELATED"/>
    <property type="match status" value="1"/>
</dbReference>
<dbReference type="PANTHER" id="PTHR30146">
    <property type="entry name" value="LACI-RELATED TRANSCRIPTIONAL REPRESSOR"/>
    <property type="match status" value="1"/>
</dbReference>
<dbReference type="Pfam" id="PF00356">
    <property type="entry name" value="LacI"/>
    <property type="match status" value="1"/>
</dbReference>
<dbReference type="Pfam" id="PF13377">
    <property type="entry name" value="Peripla_BP_3"/>
    <property type="match status" value="1"/>
</dbReference>
<dbReference type="PRINTS" id="PR00036">
    <property type="entry name" value="HTHLACI"/>
</dbReference>
<dbReference type="SMART" id="SM00354">
    <property type="entry name" value="HTH_LACI"/>
    <property type="match status" value="1"/>
</dbReference>
<dbReference type="SUPFAM" id="SSF47413">
    <property type="entry name" value="lambda repressor-like DNA-binding domains"/>
    <property type="match status" value="1"/>
</dbReference>
<dbReference type="SUPFAM" id="SSF53822">
    <property type="entry name" value="Periplasmic binding protein-like I"/>
    <property type="match status" value="1"/>
</dbReference>
<dbReference type="PROSITE" id="PS00356">
    <property type="entry name" value="HTH_LACI_1"/>
    <property type="match status" value="1"/>
</dbReference>
<dbReference type="PROSITE" id="PS50932">
    <property type="entry name" value="HTH_LACI_2"/>
    <property type="match status" value="1"/>
</dbReference>
<protein>
    <recommendedName>
        <fullName evidence="1">HTH-type transcriptional repressor PurR</fullName>
    </recommendedName>
    <alternativeName>
        <fullName evidence="1">Pur regulon repressor</fullName>
    </alternativeName>
    <alternativeName>
        <fullName evidence="1">Purine nucleotide synthesis repressor</fullName>
    </alternativeName>
</protein>
<evidence type="ECO:0000255" key="1">
    <source>
        <dbReference type="HAMAP-Rule" id="MF_01277"/>
    </source>
</evidence>
<organism>
    <name type="scientific">Erwinia tasmaniensis (strain DSM 17950 / CFBP 7177 / CIP 109463 / NCPPB 4357 / Et1/99)</name>
    <dbReference type="NCBI Taxonomy" id="465817"/>
    <lineage>
        <taxon>Bacteria</taxon>
        <taxon>Pseudomonadati</taxon>
        <taxon>Pseudomonadota</taxon>
        <taxon>Gammaproteobacteria</taxon>
        <taxon>Enterobacterales</taxon>
        <taxon>Erwiniaceae</taxon>
        <taxon>Erwinia</taxon>
    </lineage>
</organism>
<reference key="1">
    <citation type="journal article" date="2008" name="Environ. Microbiol.">
        <title>The genome of Erwinia tasmaniensis strain Et1/99, a non-pathogenic bacterium in the genus Erwinia.</title>
        <authorList>
            <person name="Kube M."/>
            <person name="Migdoll A.M."/>
            <person name="Mueller I."/>
            <person name="Kuhl H."/>
            <person name="Beck A."/>
            <person name="Reinhardt R."/>
            <person name="Geider K."/>
        </authorList>
    </citation>
    <scope>NUCLEOTIDE SEQUENCE [LARGE SCALE GENOMIC DNA]</scope>
    <source>
        <strain>DSM 17950 / CFBP 7177 / CIP 109463 / NCPPB 4357 / Et1/99</strain>
    </source>
</reference>
<proteinExistence type="inferred from homology"/>
<keyword id="KW-0238">DNA-binding</keyword>
<keyword id="KW-0658">Purine biosynthesis</keyword>
<keyword id="KW-1185">Reference proteome</keyword>
<keyword id="KW-0678">Repressor</keyword>
<keyword id="KW-0804">Transcription</keyword>
<keyword id="KW-0805">Transcription regulation</keyword>
<sequence>MATIKDVAKRAGVSTTTVSHVINKTRFVADETREAVWVAIKELHYSPSAVARSLKVNHTKTIGLLATSSEAPYFAEIIEAVENSCFAKGYTLILGNAHNNIEKQQAYLSMMAQKRVDGLLVMCSEYPDALISMLEDHRNIPMVVMDWGKSRGDFTDTVLDNAFEGGYLAGRYLIERGHRDIAAIPGQLERNTGGGRHAGFLKALTEAGIVLREEWLVQGDFEPESGYRAMQQILAQKQRPTAVFCGGDIMAMGAICAADEMGLRVPQDISVIGYDNVRNARYFTPALTTVHQPKERLGETAFNMLLDRITSKREESQTIEVYPTLIERRSVADGPYRDYRR</sequence>
<name>PURR_ERWT9</name>